<name>METE_BACMK</name>
<reference key="1">
    <citation type="journal article" date="2008" name="Chem. Biol. Interact.">
        <title>Extending the Bacillus cereus group genomics to putative food-borne pathogens of different toxicity.</title>
        <authorList>
            <person name="Lapidus A."/>
            <person name="Goltsman E."/>
            <person name="Auger S."/>
            <person name="Galleron N."/>
            <person name="Segurens B."/>
            <person name="Dossat C."/>
            <person name="Land M.L."/>
            <person name="Broussolle V."/>
            <person name="Brillard J."/>
            <person name="Guinebretiere M.-H."/>
            <person name="Sanchis V."/>
            <person name="Nguen-the C."/>
            <person name="Lereclus D."/>
            <person name="Richardson P."/>
            <person name="Wincker P."/>
            <person name="Weissenbach J."/>
            <person name="Ehrlich S.D."/>
            <person name="Sorokin A."/>
        </authorList>
    </citation>
    <scope>NUCLEOTIDE SEQUENCE [LARGE SCALE GENOMIC DNA]</scope>
    <source>
        <strain>KBAB4</strain>
    </source>
</reference>
<accession>A9VFA6</accession>
<gene>
    <name evidence="1" type="primary">metE</name>
    <name type="ordered locus">BcerKBAB4_3831</name>
</gene>
<evidence type="ECO:0000255" key="1">
    <source>
        <dbReference type="HAMAP-Rule" id="MF_00172"/>
    </source>
</evidence>
<protein>
    <recommendedName>
        <fullName evidence="1">5-methyltetrahydropteroyltriglutamate--homocysteine methyltransferase</fullName>
        <ecNumber evidence="1">2.1.1.14</ecNumber>
    </recommendedName>
    <alternativeName>
        <fullName evidence="1">Cobalamin-independent methionine synthase</fullName>
    </alternativeName>
    <alternativeName>
        <fullName evidence="1">Methionine synthase, vitamin-B12 independent isozyme</fullName>
    </alternativeName>
</protein>
<feature type="chain" id="PRO_1000097814" description="5-methyltetrahydropteroyltriglutamate--homocysteine methyltransferase">
    <location>
        <begin position="1"/>
        <end position="762"/>
    </location>
</feature>
<feature type="active site" description="Proton donor" evidence="1">
    <location>
        <position position="698"/>
    </location>
</feature>
<feature type="binding site" evidence="1">
    <location>
        <begin position="17"/>
        <end position="20"/>
    </location>
    <ligand>
        <name>5-methyltetrahydropteroyltri-L-glutamate</name>
        <dbReference type="ChEBI" id="CHEBI:58207"/>
    </ligand>
</feature>
<feature type="binding site" evidence="1">
    <location>
        <position position="111"/>
    </location>
    <ligand>
        <name>5-methyltetrahydropteroyltri-L-glutamate</name>
        <dbReference type="ChEBI" id="CHEBI:58207"/>
    </ligand>
</feature>
<feature type="binding site" evidence="1">
    <location>
        <begin position="435"/>
        <end position="437"/>
    </location>
    <ligand>
        <name>L-homocysteine</name>
        <dbReference type="ChEBI" id="CHEBI:58199"/>
    </ligand>
</feature>
<feature type="binding site" evidence="1">
    <location>
        <begin position="435"/>
        <end position="437"/>
    </location>
    <ligand>
        <name>L-methionine</name>
        <dbReference type="ChEBI" id="CHEBI:57844"/>
    </ligand>
</feature>
<feature type="binding site" evidence="1">
    <location>
        <position position="488"/>
    </location>
    <ligand>
        <name>L-homocysteine</name>
        <dbReference type="ChEBI" id="CHEBI:58199"/>
    </ligand>
</feature>
<feature type="binding site" evidence="1">
    <location>
        <position position="488"/>
    </location>
    <ligand>
        <name>L-methionine</name>
        <dbReference type="ChEBI" id="CHEBI:57844"/>
    </ligand>
</feature>
<feature type="binding site" evidence="1">
    <location>
        <begin position="519"/>
        <end position="520"/>
    </location>
    <ligand>
        <name>5-methyltetrahydropteroyltri-L-glutamate</name>
        <dbReference type="ChEBI" id="CHEBI:58207"/>
    </ligand>
</feature>
<feature type="binding site" evidence="1">
    <location>
        <position position="565"/>
    </location>
    <ligand>
        <name>5-methyltetrahydropteroyltri-L-glutamate</name>
        <dbReference type="ChEBI" id="CHEBI:58207"/>
    </ligand>
</feature>
<feature type="binding site" evidence="1">
    <location>
        <position position="603"/>
    </location>
    <ligand>
        <name>L-homocysteine</name>
        <dbReference type="ChEBI" id="CHEBI:58199"/>
    </ligand>
</feature>
<feature type="binding site" evidence="1">
    <location>
        <position position="603"/>
    </location>
    <ligand>
        <name>L-methionine</name>
        <dbReference type="ChEBI" id="CHEBI:57844"/>
    </ligand>
</feature>
<feature type="binding site" evidence="1">
    <location>
        <position position="609"/>
    </location>
    <ligand>
        <name>5-methyltetrahydropteroyltri-L-glutamate</name>
        <dbReference type="ChEBI" id="CHEBI:58207"/>
    </ligand>
</feature>
<feature type="binding site" evidence="1">
    <location>
        <position position="645"/>
    </location>
    <ligand>
        <name>Zn(2+)</name>
        <dbReference type="ChEBI" id="CHEBI:29105"/>
        <note>catalytic</note>
    </ligand>
</feature>
<feature type="binding site" evidence="1">
    <location>
        <position position="647"/>
    </location>
    <ligand>
        <name>Zn(2+)</name>
        <dbReference type="ChEBI" id="CHEBI:29105"/>
        <note>catalytic</note>
    </ligand>
</feature>
<feature type="binding site" evidence="1">
    <location>
        <position position="669"/>
    </location>
    <ligand>
        <name>Zn(2+)</name>
        <dbReference type="ChEBI" id="CHEBI:29105"/>
        <note>catalytic</note>
    </ligand>
</feature>
<feature type="binding site" evidence="1">
    <location>
        <position position="730"/>
    </location>
    <ligand>
        <name>Zn(2+)</name>
        <dbReference type="ChEBI" id="CHEBI:29105"/>
        <note>catalytic</note>
    </ligand>
</feature>
<keyword id="KW-0028">Amino-acid biosynthesis</keyword>
<keyword id="KW-0479">Metal-binding</keyword>
<keyword id="KW-0486">Methionine biosynthesis</keyword>
<keyword id="KW-0489">Methyltransferase</keyword>
<keyword id="KW-0677">Repeat</keyword>
<keyword id="KW-0808">Transferase</keyword>
<keyword id="KW-0862">Zinc</keyword>
<organism>
    <name type="scientific">Bacillus mycoides (strain KBAB4)</name>
    <name type="common">Bacillus weihenstephanensis</name>
    <dbReference type="NCBI Taxonomy" id="315730"/>
    <lineage>
        <taxon>Bacteria</taxon>
        <taxon>Bacillati</taxon>
        <taxon>Bacillota</taxon>
        <taxon>Bacilli</taxon>
        <taxon>Bacillales</taxon>
        <taxon>Bacillaceae</taxon>
        <taxon>Bacillus</taxon>
        <taxon>Bacillus cereus group</taxon>
    </lineage>
</organism>
<dbReference type="EC" id="2.1.1.14" evidence="1"/>
<dbReference type="EMBL" id="CP000903">
    <property type="protein sequence ID" value="ABY45000.1"/>
    <property type="molecule type" value="Genomic_DNA"/>
</dbReference>
<dbReference type="RefSeq" id="WP_002014819.1">
    <property type="nucleotide sequence ID" value="NC_010184.1"/>
</dbReference>
<dbReference type="SMR" id="A9VFA6"/>
<dbReference type="GeneID" id="66266430"/>
<dbReference type="KEGG" id="bwe:BcerKBAB4_3831"/>
<dbReference type="eggNOG" id="COG0620">
    <property type="taxonomic scope" value="Bacteria"/>
</dbReference>
<dbReference type="HOGENOM" id="CLU_013175_0_0_9"/>
<dbReference type="UniPathway" id="UPA00051">
    <property type="reaction ID" value="UER00082"/>
</dbReference>
<dbReference type="Proteomes" id="UP000002154">
    <property type="component" value="Chromosome"/>
</dbReference>
<dbReference type="GO" id="GO:0003871">
    <property type="term" value="F:5-methyltetrahydropteroyltriglutamate-homocysteine S-methyltransferase activity"/>
    <property type="evidence" value="ECO:0007669"/>
    <property type="project" value="UniProtKB-UniRule"/>
</dbReference>
<dbReference type="GO" id="GO:0008270">
    <property type="term" value="F:zinc ion binding"/>
    <property type="evidence" value="ECO:0007669"/>
    <property type="project" value="InterPro"/>
</dbReference>
<dbReference type="GO" id="GO:0009086">
    <property type="term" value="P:methionine biosynthetic process"/>
    <property type="evidence" value="ECO:0007669"/>
    <property type="project" value="UniProtKB-UniRule"/>
</dbReference>
<dbReference type="GO" id="GO:0032259">
    <property type="term" value="P:methylation"/>
    <property type="evidence" value="ECO:0007669"/>
    <property type="project" value="UniProtKB-KW"/>
</dbReference>
<dbReference type="CDD" id="cd03311">
    <property type="entry name" value="CIMS_C_terminal_like"/>
    <property type="match status" value="1"/>
</dbReference>
<dbReference type="CDD" id="cd03312">
    <property type="entry name" value="CIMS_N_terminal_like"/>
    <property type="match status" value="1"/>
</dbReference>
<dbReference type="Gene3D" id="3.20.20.210">
    <property type="match status" value="2"/>
</dbReference>
<dbReference type="HAMAP" id="MF_00172">
    <property type="entry name" value="Meth_synth"/>
    <property type="match status" value="1"/>
</dbReference>
<dbReference type="InterPro" id="IPR013215">
    <property type="entry name" value="Cbl-indep_Met_Synth_N"/>
</dbReference>
<dbReference type="InterPro" id="IPR006276">
    <property type="entry name" value="Cobalamin-indep_Met_synthase"/>
</dbReference>
<dbReference type="InterPro" id="IPR002629">
    <property type="entry name" value="Met_Synth_C/arc"/>
</dbReference>
<dbReference type="InterPro" id="IPR038071">
    <property type="entry name" value="UROD/MetE-like_sf"/>
</dbReference>
<dbReference type="NCBIfam" id="TIGR01371">
    <property type="entry name" value="met_syn_B12ind"/>
    <property type="match status" value="1"/>
</dbReference>
<dbReference type="NCBIfam" id="NF003556">
    <property type="entry name" value="PRK05222.1"/>
    <property type="match status" value="1"/>
</dbReference>
<dbReference type="PANTHER" id="PTHR30519">
    <property type="entry name" value="5-METHYLTETRAHYDROPTEROYLTRIGLUTAMATE--HOMOCYSTEINE METHYLTRANSFERASE"/>
    <property type="match status" value="1"/>
</dbReference>
<dbReference type="Pfam" id="PF08267">
    <property type="entry name" value="Meth_synt_1"/>
    <property type="match status" value="1"/>
</dbReference>
<dbReference type="Pfam" id="PF01717">
    <property type="entry name" value="Meth_synt_2"/>
    <property type="match status" value="1"/>
</dbReference>
<dbReference type="PIRSF" id="PIRSF000382">
    <property type="entry name" value="MeTrfase_B12_ind"/>
    <property type="match status" value="1"/>
</dbReference>
<dbReference type="SUPFAM" id="SSF51726">
    <property type="entry name" value="UROD/MetE-like"/>
    <property type="match status" value="2"/>
</dbReference>
<comment type="function">
    <text evidence="1">Catalyzes the transfer of a methyl group from 5-methyltetrahydrofolate to homocysteine resulting in methionine formation.</text>
</comment>
<comment type="catalytic activity">
    <reaction evidence="1">
        <text>5-methyltetrahydropteroyltri-L-glutamate + L-homocysteine = tetrahydropteroyltri-L-glutamate + L-methionine</text>
        <dbReference type="Rhea" id="RHEA:21196"/>
        <dbReference type="ChEBI" id="CHEBI:57844"/>
        <dbReference type="ChEBI" id="CHEBI:58140"/>
        <dbReference type="ChEBI" id="CHEBI:58199"/>
        <dbReference type="ChEBI" id="CHEBI:58207"/>
        <dbReference type="EC" id="2.1.1.14"/>
    </reaction>
</comment>
<comment type="cofactor">
    <cofactor evidence="1">
        <name>Zn(2+)</name>
        <dbReference type="ChEBI" id="CHEBI:29105"/>
    </cofactor>
    <text evidence="1">Binds 1 zinc ion per subunit.</text>
</comment>
<comment type="pathway">
    <text evidence="1">Amino-acid biosynthesis; L-methionine biosynthesis via de novo pathway; L-methionine from L-homocysteine (MetE route): step 1/1.</text>
</comment>
<comment type="similarity">
    <text evidence="1">Belongs to the vitamin-B12 independent methionine synthase family.</text>
</comment>
<sequence>MAIQTSNLGYPRIGLQREWKKTLEAFWSNKIDEEQFLTTMKEIRLQHVKVQQEKGIELIPVGDFTYYDHVLDTAYMLGFIPSRFSEFTSYLDVYFAMARGSKDHVASEMTKWFNTNYHYIVPEYEEGLQISLKDNRPLRLYEEAKKELGVDGKPVILGPYTFLKLAKGYNEEQFATILKELVAPYVQLFSELHAAGAQIIQVDEPIFASLTKDEINQAKELYEAIHKEVPNANLLLQTYFDSVEENYEEIIAFPVSGIGLDFVHGKEGNVNAISKYGFPADKILAIGCIDGRNIWRADLDDVLSLFTTLQNQITAKGLIVQPSCSLLHTPIDKTEETHLTSELFDALAFANQKLEELVLIHSALTKGVESISSDLTTYRNAHHAIRSSAARNREDVKVARTSLKEDDFSRPLPFEKRYELQQVALQLPLLPTTTIGSFPQTSEVRQTRKQWRNGDITNEQYNQFIEKETAKWIRYQEDIGLDVLVHGEFERTDMVEYFGERLAGFSFTKNGWVQSYGSRCVKPPVIYGDVAFISGMTIKETVYAQSLTEKVVKGMLTGPVTILNWSFVRNDISRKEVSYQIALALRHEIELLESSGIRVIQVDEPALREGMPLKEKDWDAYITWAVQSFLLATSSVENETQIHTHMCYSNFEDIVDAIRALDADVISIETSRSHGEFINTLKHTTYEKGIGLGVYDIHSPRVPSKDEMFTIVEQSLQVCDPKYFWINPDCGLKTRRTEEVIPALEHMVQAAKDARSLLKTNA</sequence>
<proteinExistence type="inferred from homology"/>